<organism>
    <name type="scientific">Gracilaria tenuistipitata var. liui</name>
    <name type="common">Red alga</name>
    <dbReference type="NCBI Taxonomy" id="285951"/>
    <lineage>
        <taxon>Eukaryota</taxon>
        <taxon>Rhodophyta</taxon>
        <taxon>Florideophyceae</taxon>
        <taxon>Rhodymeniophycidae</taxon>
        <taxon>Gracilariales</taxon>
        <taxon>Gracilariaceae</taxon>
        <taxon>Gracilaria</taxon>
        <taxon>Gracilaria tenuistipitata</taxon>
    </lineage>
</organism>
<name>RK20_GRATL</name>
<evidence type="ECO:0000255" key="1">
    <source>
        <dbReference type="HAMAP-Rule" id="MF_00382"/>
    </source>
</evidence>
<evidence type="ECO:0000305" key="2"/>
<dbReference type="EMBL" id="AY673996">
    <property type="protein sequence ID" value="AAT79701.1"/>
    <property type="molecule type" value="Genomic_DNA"/>
</dbReference>
<dbReference type="RefSeq" id="YP_063626.1">
    <property type="nucleotide sequence ID" value="NC_006137.1"/>
</dbReference>
<dbReference type="SMR" id="Q6B8T4"/>
<dbReference type="GeneID" id="2943937"/>
<dbReference type="GO" id="GO:0009507">
    <property type="term" value="C:chloroplast"/>
    <property type="evidence" value="ECO:0007669"/>
    <property type="project" value="UniProtKB-SubCell"/>
</dbReference>
<dbReference type="GO" id="GO:1990904">
    <property type="term" value="C:ribonucleoprotein complex"/>
    <property type="evidence" value="ECO:0007669"/>
    <property type="project" value="UniProtKB-KW"/>
</dbReference>
<dbReference type="GO" id="GO:0005840">
    <property type="term" value="C:ribosome"/>
    <property type="evidence" value="ECO:0007669"/>
    <property type="project" value="UniProtKB-KW"/>
</dbReference>
<dbReference type="GO" id="GO:0019843">
    <property type="term" value="F:rRNA binding"/>
    <property type="evidence" value="ECO:0007669"/>
    <property type="project" value="UniProtKB-UniRule"/>
</dbReference>
<dbReference type="GO" id="GO:0003735">
    <property type="term" value="F:structural constituent of ribosome"/>
    <property type="evidence" value="ECO:0007669"/>
    <property type="project" value="InterPro"/>
</dbReference>
<dbReference type="GO" id="GO:0000027">
    <property type="term" value="P:ribosomal large subunit assembly"/>
    <property type="evidence" value="ECO:0007669"/>
    <property type="project" value="UniProtKB-UniRule"/>
</dbReference>
<dbReference type="GO" id="GO:0006412">
    <property type="term" value="P:translation"/>
    <property type="evidence" value="ECO:0007669"/>
    <property type="project" value="InterPro"/>
</dbReference>
<dbReference type="CDD" id="cd07026">
    <property type="entry name" value="Ribosomal_L20"/>
    <property type="match status" value="1"/>
</dbReference>
<dbReference type="FunFam" id="1.10.1900.20:FF:000001">
    <property type="entry name" value="50S ribosomal protein L20"/>
    <property type="match status" value="1"/>
</dbReference>
<dbReference type="Gene3D" id="6.10.160.10">
    <property type="match status" value="1"/>
</dbReference>
<dbReference type="Gene3D" id="1.10.1900.20">
    <property type="entry name" value="Ribosomal protein L20"/>
    <property type="match status" value="1"/>
</dbReference>
<dbReference type="HAMAP" id="MF_00382">
    <property type="entry name" value="Ribosomal_bL20"/>
    <property type="match status" value="1"/>
</dbReference>
<dbReference type="InterPro" id="IPR005813">
    <property type="entry name" value="Ribosomal_bL20"/>
</dbReference>
<dbReference type="InterPro" id="IPR049946">
    <property type="entry name" value="RIBOSOMAL_L20_CS"/>
</dbReference>
<dbReference type="InterPro" id="IPR035566">
    <property type="entry name" value="Ribosomal_protein_bL20_C"/>
</dbReference>
<dbReference type="NCBIfam" id="TIGR01032">
    <property type="entry name" value="rplT_bact"/>
    <property type="match status" value="1"/>
</dbReference>
<dbReference type="PANTHER" id="PTHR10986">
    <property type="entry name" value="39S RIBOSOMAL PROTEIN L20"/>
    <property type="match status" value="1"/>
</dbReference>
<dbReference type="Pfam" id="PF00453">
    <property type="entry name" value="Ribosomal_L20"/>
    <property type="match status" value="1"/>
</dbReference>
<dbReference type="PRINTS" id="PR00062">
    <property type="entry name" value="RIBOSOMALL20"/>
</dbReference>
<dbReference type="SUPFAM" id="SSF74731">
    <property type="entry name" value="Ribosomal protein L20"/>
    <property type="match status" value="1"/>
</dbReference>
<dbReference type="PROSITE" id="PS00937">
    <property type="entry name" value="RIBOSOMAL_L20"/>
    <property type="match status" value="1"/>
</dbReference>
<proteinExistence type="inferred from homology"/>
<feature type="chain" id="PRO_0000177288" description="Large ribosomal subunit protein bL20c">
    <location>
        <begin position="1"/>
        <end position="118"/>
    </location>
</feature>
<keyword id="KW-0150">Chloroplast</keyword>
<keyword id="KW-0934">Plastid</keyword>
<keyword id="KW-0687">Ribonucleoprotein</keyword>
<keyword id="KW-0689">Ribosomal protein</keyword>
<keyword id="KW-0694">RNA-binding</keyword>
<keyword id="KW-0699">rRNA-binding</keyword>
<accession>Q6B8T4</accession>
<protein>
    <recommendedName>
        <fullName evidence="1">Large ribosomal subunit protein bL20c</fullName>
    </recommendedName>
    <alternativeName>
        <fullName evidence="2">50S ribosomal protein L20, chloroplastic</fullName>
    </alternativeName>
</protein>
<comment type="function">
    <text evidence="1">Binds directly to 23S ribosomal RNA and is necessary for the in vitro assembly process of the 50S ribosomal subunit. It is not involved in the protein synthesizing functions of that subunit.</text>
</comment>
<comment type="subcellular location">
    <subcellularLocation>
        <location>Plastid</location>
        <location>Chloroplast</location>
    </subcellularLocation>
</comment>
<comment type="similarity">
    <text evidence="1">Belongs to the bacterial ribosomal protein bL20 family.</text>
</comment>
<reference key="1">
    <citation type="journal article" date="2004" name="J. Mol. Evol.">
        <title>Comparative analysis of the complete plastid genome sequence of the red alga Gracilaria tenuistipitata var. liui provides insights into the evolution of rhodoplasts and their relationship to other plastids.</title>
        <authorList>
            <person name="Hagopian J.C."/>
            <person name="Reis M."/>
            <person name="Kitajima J.P."/>
            <person name="Bhattacharya D."/>
            <person name="de Oliveira M.C."/>
        </authorList>
    </citation>
    <scope>NUCLEOTIDE SEQUENCE [LARGE SCALE GENOMIC DNA]</scope>
</reference>
<geneLocation type="chloroplast"/>
<gene>
    <name evidence="1" type="primary">rpl20</name>
    <name type="ordered locus">Grc000120</name>
</gene>
<sequence length="118" mass="13736">MTRVKRGNVARKRRKKVLKLAKGFRGSHAILFRTAKQQVLKALKYAYIGRKNRKRNYRSLWIVRINAAVRPYGITYNEFIKQLKNSSIALNRKMLSQLAILDHSVFKTILDSCTPGFK</sequence>